<reference key="1">
    <citation type="submission" date="2009-07" db="EMBL/GenBank/DDBJ databases">
        <title>Complete sequence of Pectobacterium carotovorum subsp. carotovorum PC1.</title>
        <authorList>
            <consortium name="US DOE Joint Genome Institute"/>
            <person name="Lucas S."/>
            <person name="Copeland A."/>
            <person name="Lapidus A."/>
            <person name="Glavina del Rio T."/>
            <person name="Tice H."/>
            <person name="Bruce D."/>
            <person name="Goodwin L."/>
            <person name="Pitluck S."/>
            <person name="Munk A.C."/>
            <person name="Brettin T."/>
            <person name="Detter J.C."/>
            <person name="Han C."/>
            <person name="Tapia R."/>
            <person name="Larimer F."/>
            <person name="Land M."/>
            <person name="Hauser L."/>
            <person name="Kyrpides N."/>
            <person name="Mikhailova N."/>
            <person name="Balakrishnan V."/>
            <person name="Glasner J."/>
            <person name="Perna N.T."/>
        </authorList>
    </citation>
    <scope>NUCLEOTIDE SEQUENCE [LARGE SCALE GENOMIC DNA]</scope>
    <source>
        <strain>PC1</strain>
    </source>
</reference>
<gene>
    <name evidence="1" type="primary">fmt</name>
    <name type="ordered locus">PC1_3790</name>
</gene>
<comment type="function">
    <text evidence="1">Attaches a formyl group to the free amino group of methionyl-tRNA(fMet). The formyl group appears to play a dual role in the initiator identity of N-formylmethionyl-tRNA by promoting its recognition by IF2 and preventing the misappropriation of this tRNA by the elongation apparatus.</text>
</comment>
<comment type="catalytic activity">
    <reaction evidence="1">
        <text>L-methionyl-tRNA(fMet) + (6R)-10-formyltetrahydrofolate = N-formyl-L-methionyl-tRNA(fMet) + (6S)-5,6,7,8-tetrahydrofolate + H(+)</text>
        <dbReference type="Rhea" id="RHEA:24380"/>
        <dbReference type="Rhea" id="RHEA-COMP:9952"/>
        <dbReference type="Rhea" id="RHEA-COMP:9953"/>
        <dbReference type="ChEBI" id="CHEBI:15378"/>
        <dbReference type="ChEBI" id="CHEBI:57453"/>
        <dbReference type="ChEBI" id="CHEBI:78530"/>
        <dbReference type="ChEBI" id="CHEBI:78844"/>
        <dbReference type="ChEBI" id="CHEBI:195366"/>
        <dbReference type="EC" id="2.1.2.9"/>
    </reaction>
</comment>
<comment type="similarity">
    <text evidence="1">Belongs to the Fmt family.</text>
</comment>
<proteinExistence type="inferred from homology"/>
<name>FMT_PECCP</name>
<protein>
    <recommendedName>
        <fullName evidence="1">Methionyl-tRNA formyltransferase</fullName>
        <ecNumber evidence="1">2.1.2.9</ecNumber>
    </recommendedName>
</protein>
<feature type="chain" id="PRO_1000203870" description="Methionyl-tRNA formyltransferase">
    <location>
        <begin position="1"/>
        <end position="315"/>
    </location>
</feature>
<feature type="binding site" evidence="1">
    <location>
        <begin position="113"/>
        <end position="116"/>
    </location>
    <ligand>
        <name>(6S)-5,6,7,8-tetrahydrofolate</name>
        <dbReference type="ChEBI" id="CHEBI:57453"/>
    </ligand>
</feature>
<accession>C6DFR6</accession>
<dbReference type="EC" id="2.1.2.9" evidence="1"/>
<dbReference type="EMBL" id="CP001657">
    <property type="protein sequence ID" value="ACT14805.1"/>
    <property type="molecule type" value="Genomic_DNA"/>
</dbReference>
<dbReference type="RefSeq" id="WP_015841916.1">
    <property type="nucleotide sequence ID" value="NC_012917.1"/>
</dbReference>
<dbReference type="SMR" id="C6DFR6"/>
<dbReference type="STRING" id="561230.PC1_3790"/>
<dbReference type="KEGG" id="pct:PC1_3790"/>
<dbReference type="eggNOG" id="COG0223">
    <property type="taxonomic scope" value="Bacteria"/>
</dbReference>
<dbReference type="HOGENOM" id="CLU_033347_1_2_6"/>
<dbReference type="OrthoDB" id="9802815at2"/>
<dbReference type="Proteomes" id="UP000002736">
    <property type="component" value="Chromosome"/>
</dbReference>
<dbReference type="GO" id="GO:0005829">
    <property type="term" value="C:cytosol"/>
    <property type="evidence" value="ECO:0007669"/>
    <property type="project" value="TreeGrafter"/>
</dbReference>
<dbReference type="GO" id="GO:0004479">
    <property type="term" value="F:methionyl-tRNA formyltransferase activity"/>
    <property type="evidence" value="ECO:0007669"/>
    <property type="project" value="UniProtKB-UniRule"/>
</dbReference>
<dbReference type="CDD" id="cd08646">
    <property type="entry name" value="FMT_core_Met-tRNA-FMT_N"/>
    <property type="match status" value="1"/>
</dbReference>
<dbReference type="CDD" id="cd08704">
    <property type="entry name" value="Met_tRNA_FMT_C"/>
    <property type="match status" value="1"/>
</dbReference>
<dbReference type="FunFam" id="3.10.25.10:FF:000001">
    <property type="entry name" value="Methionyl-tRNA formyltransferase"/>
    <property type="match status" value="1"/>
</dbReference>
<dbReference type="FunFam" id="3.40.50.170:FF:000003">
    <property type="entry name" value="Methionyl-tRNA formyltransferase"/>
    <property type="match status" value="1"/>
</dbReference>
<dbReference type="Gene3D" id="3.10.25.10">
    <property type="entry name" value="Formyl transferase, C-terminal domain"/>
    <property type="match status" value="1"/>
</dbReference>
<dbReference type="Gene3D" id="3.40.50.170">
    <property type="entry name" value="Formyl transferase, N-terminal domain"/>
    <property type="match status" value="1"/>
</dbReference>
<dbReference type="HAMAP" id="MF_00182">
    <property type="entry name" value="Formyl_trans"/>
    <property type="match status" value="1"/>
</dbReference>
<dbReference type="InterPro" id="IPR005794">
    <property type="entry name" value="Fmt"/>
</dbReference>
<dbReference type="InterPro" id="IPR005793">
    <property type="entry name" value="Formyl_trans_C"/>
</dbReference>
<dbReference type="InterPro" id="IPR037022">
    <property type="entry name" value="Formyl_trans_C_sf"/>
</dbReference>
<dbReference type="InterPro" id="IPR002376">
    <property type="entry name" value="Formyl_transf_N"/>
</dbReference>
<dbReference type="InterPro" id="IPR036477">
    <property type="entry name" value="Formyl_transf_N_sf"/>
</dbReference>
<dbReference type="InterPro" id="IPR011034">
    <property type="entry name" value="Formyl_transferase-like_C_sf"/>
</dbReference>
<dbReference type="InterPro" id="IPR001555">
    <property type="entry name" value="GART_AS"/>
</dbReference>
<dbReference type="InterPro" id="IPR044135">
    <property type="entry name" value="Met-tRNA-FMT_C"/>
</dbReference>
<dbReference type="InterPro" id="IPR041711">
    <property type="entry name" value="Met-tRNA-FMT_N"/>
</dbReference>
<dbReference type="NCBIfam" id="TIGR00460">
    <property type="entry name" value="fmt"/>
    <property type="match status" value="1"/>
</dbReference>
<dbReference type="PANTHER" id="PTHR11138">
    <property type="entry name" value="METHIONYL-TRNA FORMYLTRANSFERASE"/>
    <property type="match status" value="1"/>
</dbReference>
<dbReference type="PANTHER" id="PTHR11138:SF5">
    <property type="entry name" value="METHIONYL-TRNA FORMYLTRANSFERASE, MITOCHONDRIAL"/>
    <property type="match status" value="1"/>
</dbReference>
<dbReference type="Pfam" id="PF02911">
    <property type="entry name" value="Formyl_trans_C"/>
    <property type="match status" value="1"/>
</dbReference>
<dbReference type="Pfam" id="PF00551">
    <property type="entry name" value="Formyl_trans_N"/>
    <property type="match status" value="1"/>
</dbReference>
<dbReference type="SUPFAM" id="SSF50486">
    <property type="entry name" value="FMT C-terminal domain-like"/>
    <property type="match status" value="1"/>
</dbReference>
<dbReference type="SUPFAM" id="SSF53328">
    <property type="entry name" value="Formyltransferase"/>
    <property type="match status" value="1"/>
</dbReference>
<dbReference type="PROSITE" id="PS00373">
    <property type="entry name" value="GART"/>
    <property type="match status" value="1"/>
</dbReference>
<evidence type="ECO:0000255" key="1">
    <source>
        <dbReference type="HAMAP-Rule" id="MF_00182"/>
    </source>
</evidence>
<keyword id="KW-0648">Protein biosynthesis</keyword>
<keyword id="KW-0808">Transferase</keyword>
<sequence length="315" mass="34163">MSDSLRIIFAGTPDFAARHLDALLSSGHEVVGVFTQPDRPAGRGNKLTPSPVKVLAEQHNIPIFQPKSLRPAENQAMVQALDADVMVVVAYGLILPQPVLSMPRLGCINVHGSLLPLWRGAAPIQRALWAGDSETGVTIMQMDVGLDTGAMLHKISCPILPQDTSATLYDKLAELGPRGLLETLELLADGSAVAEAQNDALATYAEKLSKEEARLNWQLSAEQLERCIRAFNPWPVSYFTVDEQPVKVWKAEVITTAHSTLPGTILQADKQGIQVATAVGILNIQELQPAGKKVMSAQDLLNSRREWFVPGNTLD</sequence>
<organism>
    <name type="scientific">Pectobacterium carotovorum subsp. carotovorum (strain PC1)</name>
    <dbReference type="NCBI Taxonomy" id="561230"/>
    <lineage>
        <taxon>Bacteria</taxon>
        <taxon>Pseudomonadati</taxon>
        <taxon>Pseudomonadota</taxon>
        <taxon>Gammaproteobacteria</taxon>
        <taxon>Enterobacterales</taxon>
        <taxon>Pectobacteriaceae</taxon>
        <taxon>Pectobacterium</taxon>
    </lineage>
</organism>